<dbReference type="EC" id="2.7.7.8" evidence="1"/>
<dbReference type="EMBL" id="CP000608">
    <property type="protein sequence ID" value="ABO47256.1"/>
    <property type="molecule type" value="Genomic_DNA"/>
</dbReference>
<dbReference type="RefSeq" id="WP_003026846.1">
    <property type="nucleotide sequence ID" value="NC_009257.1"/>
</dbReference>
<dbReference type="SMR" id="A4IZA6"/>
<dbReference type="KEGG" id="ftw:FTW_1544"/>
<dbReference type="HOGENOM" id="CLU_004217_2_2_6"/>
<dbReference type="GO" id="GO:0005829">
    <property type="term" value="C:cytosol"/>
    <property type="evidence" value="ECO:0007669"/>
    <property type="project" value="TreeGrafter"/>
</dbReference>
<dbReference type="GO" id="GO:0000175">
    <property type="term" value="F:3'-5'-RNA exonuclease activity"/>
    <property type="evidence" value="ECO:0007669"/>
    <property type="project" value="TreeGrafter"/>
</dbReference>
<dbReference type="GO" id="GO:0000287">
    <property type="term" value="F:magnesium ion binding"/>
    <property type="evidence" value="ECO:0007669"/>
    <property type="project" value="UniProtKB-UniRule"/>
</dbReference>
<dbReference type="GO" id="GO:0004654">
    <property type="term" value="F:polyribonucleotide nucleotidyltransferase activity"/>
    <property type="evidence" value="ECO:0007669"/>
    <property type="project" value="UniProtKB-UniRule"/>
</dbReference>
<dbReference type="GO" id="GO:0003723">
    <property type="term" value="F:RNA binding"/>
    <property type="evidence" value="ECO:0007669"/>
    <property type="project" value="UniProtKB-UniRule"/>
</dbReference>
<dbReference type="GO" id="GO:0006402">
    <property type="term" value="P:mRNA catabolic process"/>
    <property type="evidence" value="ECO:0007669"/>
    <property type="project" value="UniProtKB-UniRule"/>
</dbReference>
<dbReference type="GO" id="GO:0006396">
    <property type="term" value="P:RNA processing"/>
    <property type="evidence" value="ECO:0007669"/>
    <property type="project" value="InterPro"/>
</dbReference>
<dbReference type="CDD" id="cd02393">
    <property type="entry name" value="KH-I_PNPase"/>
    <property type="match status" value="1"/>
</dbReference>
<dbReference type="CDD" id="cd11364">
    <property type="entry name" value="RNase_PH_PNPase_2"/>
    <property type="match status" value="1"/>
</dbReference>
<dbReference type="FunFam" id="3.30.1370.10:FF:000001">
    <property type="entry name" value="Polyribonucleotide nucleotidyltransferase"/>
    <property type="match status" value="1"/>
</dbReference>
<dbReference type="FunFam" id="3.30.230.70:FF:000001">
    <property type="entry name" value="Polyribonucleotide nucleotidyltransferase"/>
    <property type="match status" value="1"/>
</dbReference>
<dbReference type="FunFam" id="3.30.230.70:FF:000002">
    <property type="entry name" value="Polyribonucleotide nucleotidyltransferase"/>
    <property type="match status" value="1"/>
</dbReference>
<dbReference type="Gene3D" id="3.30.230.70">
    <property type="entry name" value="GHMP Kinase, N-terminal domain"/>
    <property type="match status" value="2"/>
</dbReference>
<dbReference type="Gene3D" id="3.30.1370.10">
    <property type="entry name" value="K Homology domain, type 1"/>
    <property type="match status" value="1"/>
</dbReference>
<dbReference type="Gene3D" id="2.40.50.140">
    <property type="entry name" value="Nucleic acid-binding proteins"/>
    <property type="match status" value="1"/>
</dbReference>
<dbReference type="HAMAP" id="MF_01595">
    <property type="entry name" value="PNPase"/>
    <property type="match status" value="1"/>
</dbReference>
<dbReference type="InterPro" id="IPR001247">
    <property type="entry name" value="ExoRNase_PH_dom1"/>
</dbReference>
<dbReference type="InterPro" id="IPR015847">
    <property type="entry name" value="ExoRNase_PH_dom2"/>
</dbReference>
<dbReference type="InterPro" id="IPR036345">
    <property type="entry name" value="ExoRNase_PH_dom2_sf"/>
</dbReference>
<dbReference type="InterPro" id="IPR004087">
    <property type="entry name" value="KH_dom"/>
</dbReference>
<dbReference type="InterPro" id="IPR004088">
    <property type="entry name" value="KH_dom_type_1"/>
</dbReference>
<dbReference type="InterPro" id="IPR036612">
    <property type="entry name" value="KH_dom_type_1_sf"/>
</dbReference>
<dbReference type="InterPro" id="IPR012340">
    <property type="entry name" value="NA-bd_OB-fold"/>
</dbReference>
<dbReference type="InterPro" id="IPR012162">
    <property type="entry name" value="PNPase"/>
</dbReference>
<dbReference type="InterPro" id="IPR027408">
    <property type="entry name" value="PNPase/RNase_PH_dom_sf"/>
</dbReference>
<dbReference type="InterPro" id="IPR015848">
    <property type="entry name" value="PNPase_PH_RNA-bd_bac/org-type"/>
</dbReference>
<dbReference type="InterPro" id="IPR036456">
    <property type="entry name" value="PNPase_PH_RNA-bd_sf"/>
</dbReference>
<dbReference type="InterPro" id="IPR020568">
    <property type="entry name" value="Ribosomal_Su5_D2-typ_SF"/>
</dbReference>
<dbReference type="InterPro" id="IPR003029">
    <property type="entry name" value="S1_domain"/>
</dbReference>
<dbReference type="NCBIfam" id="TIGR03591">
    <property type="entry name" value="polynuc_phos"/>
    <property type="match status" value="1"/>
</dbReference>
<dbReference type="NCBIfam" id="NF008805">
    <property type="entry name" value="PRK11824.1"/>
    <property type="match status" value="1"/>
</dbReference>
<dbReference type="PANTHER" id="PTHR11252">
    <property type="entry name" value="POLYRIBONUCLEOTIDE NUCLEOTIDYLTRANSFERASE"/>
    <property type="match status" value="1"/>
</dbReference>
<dbReference type="PANTHER" id="PTHR11252:SF0">
    <property type="entry name" value="POLYRIBONUCLEOTIDE NUCLEOTIDYLTRANSFERASE 1, MITOCHONDRIAL"/>
    <property type="match status" value="1"/>
</dbReference>
<dbReference type="Pfam" id="PF00013">
    <property type="entry name" value="KH_1"/>
    <property type="match status" value="1"/>
</dbReference>
<dbReference type="Pfam" id="PF03726">
    <property type="entry name" value="PNPase"/>
    <property type="match status" value="1"/>
</dbReference>
<dbReference type="Pfam" id="PF01138">
    <property type="entry name" value="RNase_PH"/>
    <property type="match status" value="2"/>
</dbReference>
<dbReference type="Pfam" id="PF03725">
    <property type="entry name" value="RNase_PH_C"/>
    <property type="match status" value="2"/>
</dbReference>
<dbReference type="Pfam" id="PF00575">
    <property type="entry name" value="S1"/>
    <property type="match status" value="1"/>
</dbReference>
<dbReference type="PIRSF" id="PIRSF005499">
    <property type="entry name" value="PNPase"/>
    <property type="match status" value="1"/>
</dbReference>
<dbReference type="SMART" id="SM00322">
    <property type="entry name" value="KH"/>
    <property type="match status" value="1"/>
</dbReference>
<dbReference type="SMART" id="SM00316">
    <property type="entry name" value="S1"/>
    <property type="match status" value="1"/>
</dbReference>
<dbReference type="SUPFAM" id="SSF54791">
    <property type="entry name" value="Eukaryotic type KH-domain (KH-domain type I)"/>
    <property type="match status" value="1"/>
</dbReference>
<dbReference type="SUPFAM" id="SSF50249">
    <property type="entry name" value="Nucleic acid-binding proteins"/>
    <property type="match status" value="1"/>
</dbReference>
<dbReference type="SUPFAM" id="SSF46915">
    <property type="entry name" value="Polynucleotide phosphorylase/guanosine pentaphosphate synthase (PNPase/GPSI), domain 3"/>
    <property type="match status" value="1"/>
</dbReference>
<dbReference type="SUPFAM" id="SSF55666">
    <property type="entry name" value="Ribonuclease PH domain 2-like"/>
    <property type="match status" value="2"/>
</dbReference>
<dbReference type="SUPFAM" id="SSF54211">
    <property type="entry name" value="Ribosomal protein S5 domain 2-like"/>
    <property type="match status" value="2"/>
</dbReference>
<dbReference type="PROSITE" id="PS50084">
    <property type="entry name" value="KH_TYPE_1"/>
    <property type="match status" value="1"/>
</dbReference>
<dbReference type="PROSITE" id="PS50126">
    <property type="entry name" value="S1"/>
    <property type="match status" value="1"/>
</dbReference>
<organism>
    <name type="scientific">Francisella tularensis subsp. tularensis (strain WY96-3418)</name>
    <dbReference type="NCBI Taxonomy" id="418136"/>
    <lineage>
        <taxon>Bacteria</taxon>
        <taxon>Pseudomonadati</taxon>
        <taxon>Pseudomonadota</taxon>
        <taxon>Gammaproteobacteria</taxon>
        <taxon>Thiotrichales</taxon>
        <taxon>Francisellaceae</taxon>
        <taxon>Francisella</taxon>
    </lineage>
</organism>
<proteinExistence type="inferred from homology"/>
<name>PNP_FRATW</name>
<keyword id="KW-0963">Cytoplasm</keyword>
<keyword id="KW-0460">Magnesium</keyword>
<keyword id="KW-0479">Metal-binding</keyword>
<keyword id="KW-0548">Nucleotidyltransferase</keyword>
<keyword id="KW-0694">RNA-binding</keyword>
<keyword id="KW-0808">Transferase</keyword>
<protein>
    <recommendedName>
        <fullName evidence="1">Polyribonucleotide nucleotidyltransferase</fullName>
        <ecNumber evidence="1">2.7.7.8</ecNumber>
    </recommendedName>
    <alternativeName>
        <fullName evidence="1">Polynucleotide phosphorylase</fullName>
        <shortName evidence="1">PNPase</shortName>
    </alternativeName>
</protein>
<feature type="chain" id="PRO_0000329655" description="Polyribonucleotide nucleotidyltransferase">
    <location>
        <begin position="1"/>
        <end position="693"/>
    </location>
</feature>
<feature type="domain" description="KH" evidence="1">
    <location>
        <begin position="556"/>
        <end position="615"/>
    </location>
</feature>
<feature type="domain" description="S1 motif" evidence="1">
    <location>
        <begin position="625"/>
        <end position="693"/>
    </location>
</feature>
<feature type="binding site" evidence="1">
    <location>
        <position position="489"/>
    </location>
    <ligand>
        <name>Mg(2+)</name>
        <dbReference type="ChEBI" id="CHEBI:18420"/>
    </ligand>
</feature>
<feature type="binding site" evidence="1">
    <location>
        <position position="495"/>
    </location>
    <ligand>
        <name>Mg(2+)</name>
        <dbReference type="ChEBI" id="CHEBI:18420"/>
    </ligand>
</feature>
<gene>
    <name evidence="1" type="primary">pnp</name>
    <name type="ordered locus">FTW_1544</name>
</gene>
<comment type="function">
    <text evidence="1">Involved in mRNA degradation. Catalyzes the phosphorolysis of single-stranded polyribonucleotides processively in the 3'- to 5'-direction.</text>
</comment>
<comment type="catalytic activity">
    <reaction evidence="1">
        <text>RNA(n+1) + phosphate = RNA(n) + a ribonucleoside 5'-diphosphate</text>
        <dbReference type="Rhea" id="RHEA:22096"/>
        <dbReference type="Rhea" id="RHEA-COMP:14527"/>
        <dbReference type="Rhea" id="RHEA-COMP:17342"/>
        <dbReference type="ChEBI" id="CHEBI:43474"/>
        <dbReference type="ChEBI" id="CHEBI:57930"/>
        <dbReference type="ChEBI" id="CHEBI:140395"/>
        <dbReference type="EC" id="2.7.7.8"/>
    </reaction>
</comment>
<comment type="cofactor">
    <cofactor evidence="1">
        <name>Mg(2+)</name>
        <dbReference type="ChEBI" id="CHEBI:18420"/>
    </cofactor>
</comment>
<comment type="subunit">
    <text evidence="1">Component of the RNA degradosome, which is a multiprotein complex involved in RNA processing and mRNA degradation.</text>
</comment>
<comment type="subcellular location">
    <subcellularLocation>
        <location evidence="1">Cytoplasm</location>
    </subcellularLocation>
</comment>
<comment type="similarity">
    <text evidence="1">Belongs to the polyribonucleotide nucleotidyltransferase family.</text>
</comment>
<sequence length="693" mass="75360">MKIFREVFELGNKEIILETGGMARQADGSVTVSCGNNVVLVTTVVKKSVADGTDFFPLSVHYLEKTYAAGKIPGGFLRREGRPSEEQILISRLIDRSIRPSFPDGFFNEIQIVATVLSYDGAVAPDILALIGASASLAISGAPYDDVVAGVRVGYTNGKYILNPNKQDLRDSDLDLVVSGTDDAILMVESEANSLPESVMLGGILYAHKHLKTIINSINRLAKVASKPRIEYSIYQINKFLKSQIKSQFFGEIKNAYTIASKQERNLKLNAIRKNVLEYIFSSDVDGNEYTEKEILEAFHDIEKDLVRSNILEGKPRIDGRCTETIRPINVKIGVLPGVHGSALFTRGETQALVVTTLGSDRDAQLVESLDGIEKCRYMLHYNFPPYSVGECGMVGMAPKRREIGHANLAKRATQAVFPNEEAYPYVVRVVSEILESNGSSSMATVCGSSLSMMDAGVPIAEPVAGIAMGLIKDGAKYAVLSDILGDEDHLGDMDFKVAGTRYGVTALQMDIKIKGISREILEQALEQARVGRLHILGIMNEVIKEHKEAVSDVAPQIHVMNINPAKIKDVVGRGGATVKGIVEKTGAQIDTSDSGEVKVFAKDKKSMDMAVAMIEEIVAEVEEGQVYKGKIVKLLDSGVFVNLLGSQDGYLPFSEIEQAGMKTNSLVEGQGLEVLVQNIDRGGRVKLSLVAR</sequence>
<reference key="1">
    <citation type="journal article" date="2007" name="PLoS ONE">
        <title>Complete genomic characterization of a pathogenic A.II strain of Francisella tularensis subspecies tularensis.</title>
        <authorList>
            <person name="Beckstrom-Sternberg S.M."/>
            <person name="Auerbach R.K."/>
            <person name="Godbole S."/>
            <person name="Pearson J.V."/>
            <person name="Beckstrom-Sternberg J.S."/>
            <person name="Deng Z."/>
            <person name="Munk C."/>
            <person name="Kubota K."/>
            <person name="Zhou Y."/>
            <person name="Bruce D."/>
            <person name="Noronha J."/>
            <person name="Scheuermann R.H."/>
            <person name="Wang A."/>
            <person name="Wei X."/>
            <person name="Wang J."/>
            <person name="Hao J."/>
            <person name="Wagner D.M."/>
            <person name="Brettin T.S."/>
            <person name="Brown N."/>
            <person name="Gilna P."/>
            <person name="Keim P.S."/>
        </authorList>
    </citation>
    <scope>NUCLEOTIDE SEQUENCE [LARGE SCALE GENOMIC DNA]</scope>
    <source>
        <strain>WY96-3418</strain>
    </source>
</reference>
<evidence type="ECO:0000255" key="1">
    <source>
        <dbReference type="HAMAP-Rule" id="MF_01595"/>
    </source>
</evidence>
<accession>A4IZA6</accession>